<reference key="1">
    <citation type="journal article" date="2004" name="Science">
        <title>The genomic sequence of the accidental pathogen Legionella pneumophila.</title>
        <authorList>
            <person name="Chien M."/>
            <person name="Morozova I."/>
            <person name="Shi S."/>
            <person name="Sheng H."/>
            <person name="Chen J."/>
            <person name="Gomez S.M."/>
            <person name="Asamani G."/>
            <person name="Hill K."/>
            <person name="Nuara J."/>
            <person name="Feder M."/>
            <person name="Rineer J."/>
            <person name="Greenberg J.J."/>
            <person name="Steshenko V."/>
            <person name="Park S.H."/>
            <person name="Zhao B."/>
            <person name="Teplitskaya E."/>
            <person name="Edwards J.R."/>
            <person name="Pampou S."/>
            <person name="Georghiou A."/>
            <person name="Chou I.-C."/>
            <person name="Iannuccilli W."/>
            <person name="Ulz M.E."/>
            <person name="Kim D.H."/>
            <person name="Geringer-Sameth A."/>
            <person name="Goldsberry C."/>
            <person name="Morozov P."/>
            <person name="Fischer S.G."/>
            <person name="Segal G."/>
            <person name="Qu X."/>
            <person name="Rzhetsky A."/>
            <person name="Zhang P."/>
            <person name="Cayanis E."/>
            <person name="De Jong P.J."/>
            <person name="Ju J."/>
            <person name="Kalachikov S."/>
            <person name="Shuman H.A."/>
            <person name="Russo J.J."/>
        </authorList>
    </citation>
    <scope>NUCLEOTIDE SEQUENCE [LARGE SCALE GENOMIC DNA]</scope>
    <source>
        <strain>Philadelphia 1 / ATCC 33152 / DSM 7513</strain>
    </source>
</reference>
<evidence type="ECO:0000255" key="1">
    <source>
        <dbReference type="HAMAP-Rule" id="MF_00222"/>
    </source>
</evidence>
<organism>
    <name type="scientific">Legionella pneumophila subsp. pneumophila (strain Philadelphia 1 / ATCC 33152 / DSM 7513)</name>
    <dbReference type="NCBI Taxonomy" id="272624"/>
    <lineage>
        <taxon>Bacteria</taxon>
        <taxon>Pseudomonadati</taxon>
        <taxon>Pseudomonadota</taxon>
        <taxon>Gammaproteobacteria</taxon>
        <taxon>Legionellales</taxon>
        <taxon>Legionellaceae</taxon>
        <taxon>Legionella</taxon>
    </lineage>
</organism>
<sequence length="265" mass="29850">MLRRFAVIGHPIAHSLSPVIHQMFAQQTQIELIYEKILGDDVKFEQQISDFFIQYGNGLNVTLPYKKRAYELAKIRTQRCTLAGAANTLWMEENQLHADNTDGIGLIRDLSRFLELKDKKILILGAGGAARGIIFPLLEAKPLQLIVANRTLEKAEELQRQFPQINVTSFAELTEFFDLIINATSTSLSGQVIVLPEEVLSHKPFCYDLAYNQKTSTAFVQYARNGGCEAVDGLGMLVEQAAEAFFTWNKVMPSTQKILEHLRSF</sequence>
<protein>
    <recommendedName>
        <fullName evidence="1">Shikimate dehydrogenase (NADP(+))</fullName>
        <shortName evidence="1">SDH</shortName>
        <ecNumber evidence="1">1.1.1.25</ecNumber>
    </recommendedName>
</protein>
<name>AROE_LEGPH</name>
<dbReference type="EC" id="1.1.1.25" evidence="1"/>
<dbReference type="EMBL" id="AE017354">
    <property type="protein sequence ID" value="AAU28856.1"/>
    <property type="molecule type" value="Genomic_DNA"/>
</dbReference>
<dbReference type="RefSeq" id="WP_010948495.1">
    <property type="nucleotide sequence ID" value="NC_002942.5"/>
</dbReference>
<dbReference type="RefSeq" id="YP_096803.1">
    <property type="nucleotide sequence ID" value="NC_002942.5"/>
</dbReference>
<dbReference type="SMR" id="Q5ZRS2"/>
<dbReference type="STRING" id="272624.lpg2808"/>
<dbReference type="PaxDb" id="272624-lpg2808"/>
<dbReference type="GeneID" id="57036806"/>
<dbReference type="KEGG" id="lpn:lpg2808"/>
<dbReference type="PATRIC" id="fig|272624.6.peg.2989"/>
<dbReference type="eggNOG" id="COG0169">
    <property type="taxonomic scope" value="Bacteria"/>
</dbReference>
<dbReference type="HOGENOM" id="CLU_044063_2_1_6"/>
<dbReference type="OrthoDB" id="9776868at2"/>
<dbReference type="UniPathway" id="UPA00053">
    <property type="reaction ID" value="UER00087"/>
</dbReference>
<dbReference type="Proteomes" id="UP000000609">
    <property type="component" value="Chromosome"/>
</dbReference>
<dbReference type="GO" id="GO:0005829">
    <property type="term" value="C:cytosol"/>
    <property type="evidence" value="ECO:0007669"/>
    <property type="project" value="TreeGrafter"/>
</dbReference>
<dbReference type="GO" id="GO:0050661">
    <property type="term" value="F:NADP binding"/>
    <property type="evidence" value="ECO:0007669"/>
    <property type="project" value="InterPro"/>
</dbReference>
<dbReference type="GO" id="GO:0004764">
    <property type="term" value="F:shikimate 3-dehydrogenase (NADP+) activity"/>
    <property type="evidence" value="ECO:0007669"/>
    <property type="project" value="UniProtKB-UniRule"/>
</dbReference>
<dbReference type="GO" id="GO:0008652">
    <property type="term" value="P:amino acid biosynthetic process"/>
    <property type="evidence" value="ECO:0007669"/>
    <property type="project" value="UniProtKB-KW"/>
</dbReference>
<dbReference type="GO" id="GO:0009073">
    <property type="term" value="P:aromatic amino acid family biosynthetic process"/>
    <property type="evidence" value="ECO:0007669"/>
    <property type="project" value="UniProtKB-KW"/>
</dbReference>
<dbReference type="GO" id="GO:0009423">
    <property type="term" value="P:chorismate biosynthetic process"/>
    <property type="evidence" value="ECO:0007669"/>
    <property type="project" value="UniProtKB-UniRule"/>
</dbReference>
<dbReference type="GO" id="GO:0019632">
    <property type="term" value="P:shikimate metabolic process"/>
    <property type="evidence" value="ECO:0007669"/>
    <property type="project" value="InterPro"/>
</dbReference>
<dbReference type="CDD" id="cd01065">
    <property type="entry name" value="NAD_bind_Shikimate_DH"/>
    <property type="match status" value="1"/>
</dbReference>
<dbReference type="FunFam" id="3.40.50.10860:FF:000006">
    <property type="entry name" value="Shikimate dehydrogenase (NADP(+))"/>
    <property type="match status" value="1"/>
</dbReference>
<dbReference type="Gene3D" id="3.40.50.10860">
    <property type="entry name" value="Leucine Dehydrogenase, chain A, domain 1"/>
    <property type="match status" value="1"/>
</dbReference>
<dbReference type="Gene3D" id="3.40.50.720">
    <property type="entry name" value="NAD(P)-binding Rossmann-like Domain"/>
    <property type="match status" value="1"/>
</dbReference>
<dbReference type="HAMAP" id="MF_00222">
    <property type="entry name" value="Shikimate_DH_AroE"/>
    <property type="match status" value="1"/>
</dbReference>
<dbReference type="InterPro" id="IPR046346">
    <property type="entry name" value="Aminoacid_DH-like_N_sf"/>
</dbReference>
<dbReference type="InterPro" id="IPR036291">
    <property type="entry name" value="NAD(P)-bd_dom_sf"/>
</dbReference>
<dbReference type="InterPro" id="IPR041121">
    <property type="entry name" value="SDH_C"/>
</dbReference>
<dbReference type="InterPro" id="IPR011342">
    <property type="entry name" value="Shikimate_DH"/>
</dbReference>
<dbReference type="InterPro" id="IPR013708">
    <property type="entry name" value="Shikimate_DH-bd_N"/>
</dbReference>
<dbReference type="InterPro" id="IPR022893">
    <property type="entry name" value="Shikimate_DH_fam"/>
</dbReference>
<dbReference type="InterPro" id="IPR006151">
    <property type="entry name" value="Shikm_DH/Glu-tRNA_Rdtase"/>
</dbReference>
<dbReference type="NCBIfam" id="TIGR00507">
    <property type="entry name" value="aroE"/>
    <property type="match status" value="1"/>
</dbReference>
<dbReference type="NCBIfam" id="NF001310">
    <property type="entry name" value="PRK00258.1-2"/>
    <property type="match status" value="1"/>
</dbReference>
<dbReference type="PANTHER" id="PTHR21089:SF1">
    <property type="entry name" value="BIFUNCTIONAL 3-DEHYDROQUINATE DEHYDRATASE_SHIKIMATE DEHYDROGENASE, CHLOROPLASTIC"/>
    <property type="match status" value="1"/>
</dbReference>
<dbReference type="PANTHER" id="PTHR21089">
    <property type="entry name" value="SHIKIMATE DEHYDROGENASE"/>
    <property type="match status" value="1"/>
</dbReference>
<dbReference type="Pfam" id="PF18317">
    <property type="entry name" value="SDH_C"/>
    <property type="match status" value="1"/>
</dbReference>
<dbReference type="Pfam" id="PF01488">
    <property type="entry name" value="Shikimate_DH"/>
    <property type="match status" value="1"/>
</dbReference>
<dbReference type="Pfam" id="PF08501">
    <property type="entry name" value="Shikimate_dh_N"/>
    <property type="match status" value="1"/>
</dbReference>
<dbReference type="SUPFAM" id="SSF53223">
    <property type="entry name" value="Aminoacid dehydrogenase-like, N-terminal domain"/>
    <property type="match status" value="1"/>
</dbReference>
<dbReference type="SUPFAM" id="SSF51735">
    <property type="entry name" value="NAD(P)-binding Rossmann-fold domains"/>
    <property type="match status" value="1"/>
</dbReference>
<comment type="function">
    <text evidence="1">Involved in the biosynthesis of the chorismate, which leads to the biosynthesis of aromatic amino acids. Catalyzes the reversible NADPH linked reduction of 3-dehydroshikimate (DHSA) to yield shikimate (SA).</text>
</comment>
<comment type="catalytic activity">
    <reaction evidence="1">
        <text>shikimate + NADP(+) = 3-dehydroshikimate + NADPH + H(+)</text>
        <dbReference type="Rhea" id="RHEA:17737"/>
        <dbReference type="ChEBI" id="CHEBI:15378"/>
        <dbReference type="ChEBI" id="CHEBI:16630"/>
        <dbReference type="ChEBI" id="CHEBI:36208"/>
        <dbReference type="ChEBI" id="CHEBI:57783"/>
        <dbReference type="ChEBI" id="CHEBI:58349"/>
        <dbReference type="EC" id="1.1.1.25"/>
    </reaction>
</comment>
<comment type="pathway">
    <text evidence="1">Metabolic intermediate biosynthesis; chorismate biosynthesis; chorismate from D-erythrose 4-phosphate and phosphoenolpyruvate: step 4/7.</text>
</comment>
<comment type="subunit">
    <text evidence="1">Homodimer.</text>
</comment>
<comment type="similarity">
    <text evidence="1">Belongs to the shikimate dehydrogenase family.</text>
</comment>
<gene>
    <name evidence="1" type="primary">aroE</name>
    <name type="ordered locus">lpg2808</name>
</gene>
<keyword id="KW-0028">Amino-acid biosynthesis</keyword>
<keyword id="KW-0057">Aromatic amino acid biosynthesis</keyword>
<keyword id="KW-0521">NADP</keyword>
<keyword id="KW-0560">Oxidoreductase</keyword>
<keyword id="KW-1185">Reference proteome</keyword>
<feature type="chain" id="PRO_0000325132" description="Shikimate dehydrogenase (NADP(+))">
    <location>
        <begin position="1"/>
        <end position="265"/>
    </location>
</feature>
<feature type="active site" description="Proton acceptor" evidence="1">
    <location>
        <position position="66"/>
    </location>
</feature>
<feature type="binding site" evidence="1">
    <location>
        <begin position="15"/>
        <end position="17"/>
    </location>
    <ligand>
        <name>shikimate</name>
        <dbReference type="ChEBI" id="CHEBI:36208"/>
    </ligand>
</feature>
<feature type="binding site" evidence="1">
    <location>
        <position position="62"/>
    </location>
    <ligand>
        <name>shikimate</name>
        <dbReference type="ChEBI" id="CHEBI:36208"/>
    </ligand>
</feature>
<feature type="binding site" evidence="1">
    <location>
        <position position="87"/>
    </location>
    <ligand>
        <name>shikimate</name>
        <dbReference type="ChEBI" id="CHEBI:36208"/>
    </ligand>
</feature>
<feature type="binding site" evidence="1">
    <location>
        <position position="102"/>
    </location>
    <ligand>
        <name>shikimate</name>
        <dbReference type="ChEBI" id="CHEBI:36208"/>
    </ligand>
</feature>
<feature type="binding site" evidence="1">
    <location>
        <begin position="125"/>
        <end position="129"/>
    </location>
    <ligand>
        <name>NADP(+)</name>
        <dbReference type="ChEBI" id="CHEBI:58349"/>
    </ligand>
</feature>
<feature type="binding site" evidence="1">
    <location>
        <begin position="149"/>
        <end position="154"/>
    </location>
    <ligand>
        <name>NADP(+)</name>
        <dbReference type="ChEBI" id="CHEBI:58349"/>
    </ligand>
</feature>
<feature type="binding site" evidence="1">
    <location>
        <position position="209"/>
    </location>
    <ligand>
        <name>NADP(+)</name>
        <dbReference type="ChEBI" id="CHEBI:58349"/>
    </ligand>
</feature>
<feature type="binding site" evidence="1">
    <location>
        <position position="211"/>
    </location>
    <ligand>
        <name>shikimate</name>
        <dbReference type="ChEBI" id="CHEBI:36208"/>
    </ligand>
</feature>
<feature type="binding site" evidence="1">
    <location>
        <position position="233"/>
    </location>
    <ligand>
        <name>NADP(+)</name>
        <dbReference type="ChEBI" id="CHEBI:58349"/>
    </ligand>
</feature>
<proteinExistence type="inferred from homology"/>
<accession>Q5ZRS2</accession>